<organism>
    <name type="scientific">Aliivibrio fischeri (strain ATCC 700601 / ES114)</name>
    <name type="common">Vibrio fischeri</name>
    <dbReference type="NCBI Taxonomy" id="312309"/>
    <lineage>
        <taxon>Bacteria</taxon>
        <taxon>Pseudomonadati</taxon>
        <taxon>Pseudomonadota</taxon>
        <taxon>Gammaproteobacteria</taxon>
        <taxon>Vibrionales</taxon>
        <taxon>Vibrionaceae</taxon>
        <taxon>Aliivibrio</taxon>
    </lineage>
</organism>
<comment type="function">
    <text evidence="2">With CysD forms the ATP sulfurylase (ATPS) that catalyzes the adenylation of sulfate producing adenosine 5'-phosphosulfate (APS) and diphosphate, the first enzymatic step in sulfur assimilation pathway. APS synthesis involves the formation of a high-energy phosphoric-sulfuric acid anhydride bond driven by GTP hydrolysis by CysN coupled to ATP hydrolysis by CysD.</text>
</comment>
<comment type="catalytic activity">
    <reaction evidence="2">
        <text>sulfate + ATP + H(+) = adenosine 5'-phosphosulfate + diphosphate</text>
        <dbReference type="Rhea" id="RHEA:18133"/>
        <dbReference type="ChEBI" id="CHEBI:15378"/>
        <dbReference type="ChEBI" id="CHEBI:16189"/>
        <dbReference type="ChEBI" id="CHEBI:30616"/>
        <dbReference type="ChEBI" id="CHEBI:33019"/>
        <dbReference type="ChEBI" id="CHEBI:58243"/>
        <dbReference type="EC" id="2.7.7.4"/>
    </reaction>
</comment>
<comment type="pathway">
    <text evidence="2">Sulfur metabolism; hydrogen sulfide biosynthesis; sulfite from sulfate: step 1/3.</text>
</comment>
<comment type="subunit">
    <text evidence="2">Heterodimer composed of CysD, the smaller subunit, and CysN.</text>
</comment>
<comment type="similarity">
    <text evidence="2">Belongs to the TRAFAC class translation factor GTPase superfamily. Classic translation factor GTPase family. CysN/NodQ subfamily.</text>
</comment>
<proteinExistence type="inferred from homology"/>
<dbReference type="EC" id="2.7.7.4" evidence="2"/>
<dbReference type="EMBL" id="CP000020">
    <property type="protein sequence ID" value="AAW84816.1"/>
    <property type="molecule type" value="Genomic_DNA"/>
</dbReference>
<dbReference type="RefSeq" id="WP_011261125.1">
    <property type="nucleotide sequence ID" value="NC_006840.2"/>
</dbReference>
<dbReference type="RefSeq" id="YP_203704.1">
    <property type="nucleotide sequence ID" value="NC_006840.2"/>
</dbReference>
<dbReference type="SMR" id="Q5E830"/>
<dbReference type="STRING" id="312309.VF_0321"/>
<dbReference type="EnsemblBacteria" id="AAW84816">
    <property type="protein sequence ID" value="AAW84816"/>
    <property type="gene ID" value="VF_0321"/>
</dbReference>
<dbReference type="GeneID" id="54162940"/>
<dbReference type="KEGG" id="vfi:VF_0321"/>
<dbReference type="PATRIC" id="fig|312309.11.peg.314"/>
<dbReference type="eggNOG" id="COG2895">
    <property type="taxonomic scope" value="Bacteria"/>
</dbReference>
<dbReference type="HOGENOM" id="CLU_007265_5_2_6"/>
<dbReference type="OrthoDB" id="9804504at2"/>
<dbReference type="UniPathway" id="UPA00140">
    <property type="reaction ID" value="UER00204"/>
</dbReference>
<dbReference type="Proteomes" id="UP000000537">
    <property type="component" value="Chromosome I"/>
</dbReference>
<dbReference type="GO" id="GO:0005524">
    <property type="term" value="F:ATP binding"/>
    <property type="evidence" value="ECO:0007669"/>
    <property type="project" value="UniProtKB-KW"/>
</dbReference>
<dbReference type="GO" id="GO:0005525">
    <property type="term" value="F:GTP binding"/>
    <property type="evidence" value="ECO:0007669"/>
    <property type="project" value="UniProtKB-UniRule"/>
</dbReference>
<dbReference type="GO" id="GO:0003924">
    <property type="term" value="F:GTPase activity"/>
    <property type="evidence" value="ECO:0007669"/>
    <property type="project" value="InterPro"/>
</dbReference>
<dbReference type="GO" id="GO:0004781">
    <property type="term" value="F:sulfate adenylyltransferase (ATP) activity"/>
    <property type="evidence" value="ECO:0007669"/>
    <property type="project" value="UniProtKB-UniRule"/>
</dbReference>
<dbReference type="GO" id="GO:0070814">
    <property type="term" value="P:hydrogen sulfide biosynthetic process"/>
    <property type="evidence" value="ECO:0007669"/>
    <property type="project" value="UniProtKB-UniRule"/>
</dbReference>
<dbReference type="GO" id="GO:0000103">
    <property type="term" value="P:sulfate assimilation"/>
    <property type="evidence" value="ECO:0007669"/>
    <property type="project" value="UniProtKB-UniRule"/>
</dbReference>
<dbReference type="CDD" id="cd04166">
    <property type="entry name" value="CysN_ATPS"/>
    <property type="match status" value="1"/>
</dbReference>
<dbReference type="CDD" id="cd03695">
    <property type="entry name" value="CysN_NodQ_II"/>
    <property type="match status" value="1"/>
</dbReference>
<dbReference type="CDD" id="cd04095">
    <property type="entry name" value="CysN_NoDQ_III"/>
    <property type="match status" value="1"/>
</dbReference>
<dbReference type="FunFam" id="2.40.30.10:FF:000027">
    <property type="entry name" value="Sulfate adenylyltransferase subunit 1"/>
    <property type="match status" value="1"/>
</dbReference>
<dbReference type="FunFam" id="2.40.30.10:FF:000031">
    <property type="entry name" value="Sulfate adenylyltransferase subunit 1"/>
    <property type="match status" value="1"/>
</dbReference>
<dbReference type="FunFam" id="3.40.50.300:FF:000119">
    <property type="entry name" value="Sulfate adenylyltransferase subunit 1"/>
    <property type="match status" value="1"/>
</dbReference>
<dbReference type="Gene3D" id="3.40.50.300">
    <property type="entry name" value="P-loop containing nucleotide triphosphate hydrolases"/>
    <property type="match status" value="1"/>
</dbReference>
<dbReference type="Gene3D" id="2.40.30.10">
    <property type="entry name" value="Translation factors"/>
    <property type="match status" value="2"/>
</dbReference>
<dbReference type="HAMAP" id="MF_00062">
    <property type="entry name" value="Sulf_adenylyltr_sub1"/>
    <property type="match status" value="1"/>
</dbReference>
<dbReference type="InterPro" id="IPR041757">
    <property type="entry name" value="CysN_GTP-bd"/>
</dbReference>
<dbReference type="InterPro" id="IPR044138">
    <property type="entry name" value="CysN_II"/>
</dbReference>
<dbReference type="InterPro" id="IPR044139">
    <property type="entry name" value="CysN_NoDQ_III"/>
</dbReference>
<dbReference type="InterPro" id="IPR031157">
    <property type="entry name" value="G_TR_CS"/>
</dbReference>
<dbReference type="InterPro" id="IPR054696">
    <property type="entry name" value="GTP-eEF1A_C"/>
</dbReference>
<dbReference type="InterPro" id="IPR027417">
    <property type="entry name" value="P-loop_NTPase"/>
</dbReference>
<dbReference type="InterPro" id="IPR011779">
    <property type="entry name" value="SO4_adenylTrfase_lsu"/>
</dbReference>
<dbReference type="InterPro" id="IPR000795">
    <property type="entry name" value="T_Tr_GTP-bd_dom"/>
</dbReference>
<dbReference type="InterPro" id="IPR050100">
    <property type="entry name" value="TRAFAC_GTPase_members"/>
</dbReference>
<dbReference type="InterPro" id="IPR009000">
    <property type="entry name" value="Transl_B-barrel_sf"/>
</dbReference>
<dbReference type="InterPro" id="IPR009001">
    <property type="entry name" value="Transl_elong_EF1A/Init_IF2_C"/>
</dbReference>
<dbReference type="NCBIfam" id="TIGR02034">
    <property type="entry name" value="CysN"/>
    <property type="match status" value="1"/>
</dbReference>
<dbReference type="NCBIfam" id="NF003478">
    <property type="entry name" value="PRK05124.1"/>
    <property type="match status" value="1"/>
</dbReference>
<dbReference type="PANTHER" id="PTHR23115">
    <property type="entry name" value="TRANSLATION FACTOR"/>
    <property type="match status" value="1"/>
</dbReference>
<dbReference type="Pfam" id="PF22594">
    <property type="entry name" value="GTP-eEF1A_C"/>
    <property type="match status" value="1"/>
</dbReference>
<dbReference type="Pfam" id="PF00009">
    <property type="entry name" value="GTP_EFTU"/>
    <property type="match status" value="1"/>
</dbReference>
<dbReference type="PRINTS" id="PR00315">
    <property type="entry name" value="ELONGATNFCT"/>
</dbReference>
<dbReference type="SUPFAM" id="SSF50465">
    <property type="entry name" value="EF-Tu/eEF-1alpha/eIF2-gamma C-terminal domain"/>
    <property type="match status" value="1"/>
</dbReference>
<dbReference type="SUPFAM" id="SSF52540">
    <property type="entry name" value="P-loop containing nucleoside triphosphate hydrolases"/>
    <property type="match status" value="1"/>
</dbReference>
<dbReference type="SUPFAM" id="SSF50447">
    <property type="entry name" value="Translation proteins"/>
    <property type="match status" value="1"/>
</dbReference>
<dbReference type="PROSITE" id="PS00301">
    <property type="entry name" value="G_TR_1"/>
    <property type="match status" value="1"/>
</dbReference>
<dbReference type="PROSITE" id="PS51722">
    <property type="entry name" value="G_TR_2"/>
    <property type="match status" value="1"/>
</dbReference>
<protein>
    <recommendedName>
        <fullName evidence="2">Sulfate adenylyltransferase subunit 1</fullName>
        <ecNumber evidence="2">2.7.7.4</ecNumber>
    </recommendedName>
    <alternativeName>
        <fullName evidence="2">ATP-sulfurylase large subunit</fullName>
    </alternativeName>
    <alternativeName>
        <fullName evidence="2">Sulfate adenylate transferase</fullName>
        <shortName evidence="2">SAT</shortName>
    </alternativeName>
</protein>
<evidence type="ECO:0000250" key="1"/>
<evidence type="ECO:0000255" key="2">
    <source>
        <dbReference type="HAMAP-Rule" id="MF_00062"/>
    </source>
</evidence>
<feature type="chain" id="PRO_1000092163" description="Sulfate adenylyltransferase subunit 1">
    <location>
        <begin position="1"/>
        <end position="478"/>
    </location>
</feature>
<feature type="domain" description="tr-type G">
    <location>
        <begin position="24"/>
        <end position="240"/>
    </location>
</feature>
<feature type="region of interest" description="G1" evidence="1">
    <location>
        <begin position="33"/>
        <end position="40"/>
    </location>
</feature>
<feature type="region of interest" description="G2" evidence="1">
    <location>
        <begin position="91"/>
        <end position="95"/>
    </location>
</feature>
<feature type="region of interest" description="G3" evidence="1">
    <location>
        <begin position="112"/>
        <end position="115"/>
    </location>
</feature>
<feature type="region of interest" description="G4" evidence="1">
    <location>
        <begin position="167"/>
        <end position="170"/>
    </location>
</feature>
<feature type="region of interest" description="G5" evidence="1">
    <location>
        <begin position="206"/>
        <end position="208"/>
    </location>
</feature>
<feature type="binding site" evidence="2">
    <location>
        <begin position="33"/>
        <end position="40"/>
    </location>
    <ligand>
        <name>GTP</name>
        <dbReference type="ChEBI" id="CHEBI:37565"/>
    </ligand>
</feature>
<feature type="binding site" evidence="2">
    <location>
        <begin position="112"/>
        <end position="116"/>
    </location>
    <ligand>
        <name>GTP</name>
        <dbReference type="ChEBI" id="CHEBI:37565"/>
    </ligand>
</feature>
<feature type="binding site" evidence="2">
    <location>
        <begin position="167"/>
        <end position="170"/>
    </location>
    <ligand>
        <name>GTP</name>
        <dbReference type="ChEBI" id="CHEBI:37565"/>
    </ligand>
</feature>
<accession>Q5E830</accession>
<name>CYSN_ALIF1</name>
<reference key="1">
    <citation type="journal article" date="2005" name="Proc. Natl. Acad. Sci. U.S.A.">
        <title>Complete genome sequence of Vibrio fischeri: a symbiotic bacterium with pathogenic congeners.</title>
        <authorList>
            <person name="Ruby E.G."/>
            <person name="Urbanowski M."/>
            <person name="Campbell J."/>
            <person name="Dunn A."/>
            <person name="Faini M."/>
            <person name="Gunsalus R."/>
            <person name="Lostroh P."/>
            <person name="Lupp C."/>
            <person name="McCann J."/>
            <person name="Millikan D."/>
            <person name="Schaefer A."/>
            <person name="Stabb E."/>
            <person name="Stevens A."/>
            <person name="Visick K."/>
            <person name="Whistler C."/>
            <person name="Greenberg E.P."/>
        </authorList>
    </citation>
    <scope>NUCLEOTIDE SEQUENCE [LARGE SCALE GENOMIC DNA]</scope>
    <source>
        <strain>ATCC 700601 / ES114</strain>
    </source>
</reference>
<sequence length="478" mass="52851">MNSAVEQQLAELGIEAYLKEHQYKSLLRFLTCGSVDDGKSTLIGRLLHDSKQIYADQLDAVHADSQRVGTTGERPDLALLVDGLQAEREQGITIDVAYRYFSTQKRKFIIADTPGHEQYTRNMATGASTCNVAVILIDARKGVLDQTRRHSYIANLLGIRHFVVAVNKMDLVEYSQSRFEEIKEEYLAFSKKLNNPNLDISILPLSALEGDNVVNPSDALSWYQGEPLLEVLENVDIDADKGNGEFRFPVQYVNRPNLDFRGFAGTVSSGGISVGDEIVALPSGKKSKVARIVTFDGDLTSAQAGQAVTLTLEDEIDISRGDLLVKSQSNLQATDQFKAEIVWMTEKGLEPGRQYDIKIAGKKTVGQIDAIHHQVNINSLEKFDTQELPLNGIGLCDVSLTETVSLDRYQDCADTGGFIFIDRLTNVTVGAGMIQNLSDLSESKPINDNISAFEIELNALIRKHFPHWETKDISKLLG</sequence>
<gene>
    <name evidence="2" type="primary">cysN</name>
    <name type="ordered locus">VF_0321</name>
</gene>
<keyword id="KW-0067">ATP-binding</keyword>
<keyword id="KW-0342">GTP-binding</keyword>
<keyword id="KW-0547">Nucleotide-binding</keyword>
<keyword id="KW-0548">Nucleotidyltransferase</keyword>
<keyword id="KW-1185">Reference proteome</keyword>
<keyword id="KW-0808">Transferase</keyword>